<sequence>MVLIKEREMEIPVIDFAELDGEKRSKTMSLLDHACDKWGFFMVDNHGIDKELMEKVKKMINSHYEEHLKEKFYQSEMVKALSEGKTSDADWESSFFISHKPTSNICQIPNISEELSKTMDEYVCQLHKFAERLSKLMCENLGLDQEDIMNAFSGPKGPAFGTKVAKYPECPRPELMRGLREHTDAGGIILLLQDDQVPGLEFFKDGKWVPIPPSKNNTIFVNTGDQLEILSNGRYKSVVHRVMTVKHGSRLSIATFYNPAGDAIISPAPKLLYPSGYRFQDYLKLYSTTKFGDKGPRLETMKKMGNADSA</sequence>
<organism>
    <name type="scientific">Arabidopsis thaliana</name>
    <name type="common">Mouse-ear cress</name>
    <dbReference type="NCBI Taxonomy" id="3702"/>
    <lineage>
        <taxon>Eukaryota</taxon>
        <taxon>Viridiplantae</taxon>
        <taxon>Streptophyta</taxon>
        <taxon>Embryophyta</taxon>
        <taxon>Tracheophyta</taxon>
        <taxon>Spermatophyta</taxon>
        <taxon>Magnoliopsida</taxon>
        <taxon>eudicotyledons</taxon>
        <taxon>Gunneridae</taxon>
        <taxon>Pentapetalae</taxon>
        <taxon>rosids</taxon>
        <taxon>malvids</taxon>
        <taxon>Brassicales</taxon>
        <taxon>Brassicaceae</taxon>
        <taxon>Camelineae</taxon>
        <taxon>Arabidopsis</taxon>
    </lineage>
</organism>
<name>ACCO1_ARATH</name>
<accession>Q9ZUN4</accession>
<evidence type="ECO:0000255" key="1"/>
<evidence type="ECO:0000255" key="2">
    <source>
        <dbReference type="PROSITE-ProRule" id="PRU00805"/>
    </source>
</evidence>
<evidence type="ECO:0000269" key="3">
    <source>
    </source>
</evidence>
<evidence type="ECO:0000269" key="4">
    <source>
    </source>
</evidence>
<evidence type="ECO:0000269" key="5">
    <source>
    </source>
</evidence>
<evidence type="ECO:0000269" key="6">
    <source>
    </source>
</evidence>
<evidence type="ECO:0000269" key="7">
    <source>
    </source>
</evidence>
<evidence type="ECO:0000269" key="8">
    <source>
    </source>
</evidence>
<evidence type="ECO:0000269" key="9">
    <source>
    </source>
</evidence>
<evidence type="ECO:0000305" key="10"/>
<gene>
    <name type="primary">ACO1</name>
    <name type="ordered locus">At2g19590</name>
    <name type="ORF">F3P11.19</name>
</gene>
<dbReference type="EC" id="1.14.17.4"/>
<dbReference type="EMBL" id="AC005917">
    <property type="protein sequence ID" value="AAD10157.1"/>
    <property type="molecule type" value="Genomic_DNA"/>
</dbReference>
<dbReference type="EMBL" id="CP002685">
    <property type="protein sequence ID" value="AEC06898.1"/>
    <property type="molecule type" value="Genomic_DNA"/>
</dbReference>
<dbReference type="EMBL" id="AF370195">
    <property type="protein sequence ID" value="AAK44010.1"/>
    <property type="molecule type" value="mRNA"/>
</dbReference>
<dbReference type="EMBL" id="AY062951">
    <property type="protein sequence ID" value="AAL33783.1"/>
    <property type="molecule type" value="mRNA"/>
</dbReference>
<dbReference type="PIR" id="F84578">
    <property type="entry name" value="F84578"/>
</dbReference>
<dbReference type="RefSeq" id="NP_179549.1">
    <property type="nucleotide sequence ID" value="NM_127517.5"/>
</dbReference>
<dbReference type="SMR" id="Q9ZUN4"/>
<dbReference type="BioGRID" id="1833">
    <property type="interactions" value="1"/>
</dbReference>
<dbReference type="FunCoup" id="Q9ZUN4">
    <property type="interactions" value="255"/>
</dbReference>
<dbReference type="STRING" id="3702.Q9ZUN4"/>
<dbReference type="iPTMnet" id="Q9ZUN4"/>
<dbReference type="PaxDb" id="3702-AT2G19590.1"/>
<dbReference type="ProteomicsDB" id="243279"/>
<dbReference type="EnsemblPlants" id="AT2G19590.1">
    <property type="protein sequence ID" value="AT2G19590.1"/>
    <property type="gene ID" value="AT2G19590"/>
</dbReference>
<dbReference type="GeneID" id="816478"/>
<dbReference type="Gramene" id="AT2G19590.1">
    <property type="protein sequence ID" value="AT2G19590.1"/>
    <property type="gene ID" value="AT2G19590"/>
</dbReference>
<dbReference type="KEGG" id="ath:AT2G19590"/>
<dbReference type="Araport" id="AT2G19590"/>
<dbReference type="TAIR" id="AT2G19590">
    <property type="gene designation" value="ACO1"/>
</dbReference>
<dbReference type="eggNOG" id="KOG0143">
    <property type="taxonomic scope" value="Eukaryota"/>
</dbReference>
<dbReference type="HOGENOM" id="CLU_010119_16_1_1"/>
<dbReference type="InParanoid" id="Q9ZUN4"/>
<dbReference type="OMA" id="YPQCPHP"/>
<dbReference type="PhylomeDB" id="Q9ZUN4"/>
<dbReference type="UniPathway" id="UPA00384">
    <property type="reaction ID" value="UER00563"/>
</dbReference>
<dbReference type="PRO" id="PR:Q9ZUN4"/>
<dbReference type="Proteomes" id="UP000006548">
    <property type="component" value="Chromosome 2"/>
</dbReference>
<dbReference type="ExpressionAtlas" id="Q9ZUN4">
    <property type="expression patterns" value="baseline and differential"/>
</dbReference>
<dbReference type="GO" id="GO:0009815">
    <property type="term" value="F:1-aminocyclopropane-1-carboxylate oxidase activity"/>
    <property type="evidence" value="ECO:0007669"/>
    <property type="project" value="UniProtKB-EC"/>
</dbReference>
<dbReference type="GO" id="GO:0031418">
    <property type="term" value="F:L-ascorbic acid binding"/>
    <property type="evidence" value="ECO:0007669"/>
    <property type="project" value="UniProtKB-KW"/>
</dbReference>
<dbReference type="GO" id="GO:0046872">
    <property type="term" value="F:metal ion binding"/>
    <property type="evidence" value="ECO:0007669"/>
    <property type="project" value="UniProtKB-KW"/>
</dbReference>
<dbReference type="GO" id="GO:0071398">
    <property type="term" value="P:cellular response to fatty acid"/>
    <property type="evidence" value="ECO:0000270"/>
    <property type="project" value="UniProtKB"/>
</dbReference>
<dbReference type="GO" id="GO:0071732">
    <property type="term" value="P:cellular response to nitric oxide"/>
    <property type="evidence" value="ECO:0000270"/>
    <property type="project" value="UniProtKB"/>
</dbReference>
<dbReference type="GO" id="GO:0051365">
    <property type="term" value="P:cellular response to potassium ion starvation"/>
    <property type="evidence" value="ECO:0000270"/>
    <property type="project" value="UniProtKB"/>
</dbReference>
<dbReference type="GO" id="GO:0006952">
    <property type="term" value="P:defense response"/>
    <property type="evidence" value="ECO:0007669"/>
    <property type="project" value="UniProtKB-KW"/>
</dbReference>
<dbReference type="GO" id="GO:0009693">
    <property type="term" value="P:ethylene biosynthetic process"/>
    <property type="evidence" value="ECO:0007669"/>
    <property type="project" value="UniProtKB-UniPathway"/>
</dbReference>
<dbReference type="FunFam" id="2.60.120.330:FF:000010">
    <property type="entry name" value="1-aminocyclopropane-1-carboxylate oxidase 1"/>
    <property type="match status" value="1"/>
</dbReference>
<dbReference type="Gene3D" id="2.60.120.330">
    <property type="entry name" value="B-lactam Antibiotic, Isopenicillin N Synthase, Chain"/>
    <property type="match status" value="1"/>
</dbReference>
<dbReference type="InterPro" id="IPR026992">
    <property type="entry name" value="DIOX_N"/>
</dbReference>
<dbReference type="InterPro" id="IPR044861">
    <property type="entry name" value="IPNS-like_FE2OG_OXY"/>
</dbReference>
<dbReference type="InterPro" id="IPR027443">
    <property type="entry name" value="IPNS-like_sf"/>
</dbReference>
<dbReference type="InterPro" id="IPR005123">
    <property type="entry name" value="Oxoglu/Fe-dep_dioxygenase_dom"/>
</dbReference>
<dbReference type="InterPro" id="IPR050295">
    <property type="entry name" value="Plant_2OG-oxidoreductases"/>
</dbReference>
<dbReference type="PANTHER" id="PTHR47991">
    <property type="entry name" value="OXOGLUTARATE/IRON-DEPENDENT DIOXYGENASE"/>
    <property type="match status" value="1"/>
</dbReference>
<dbReference type="Pfam" id="PF03171">
    <property type="entry name" value="2OG-FeII_Oxy"/>
    <property type="match status" value="1"/>
</dbReference>
<dbReference type="Pfam" id="PF14226">
    <property type="entry name" value="DIOX_N"/>
    <property type="match status" value="1"/>
</dbReference>
<dbReference type="SUPFAM" id="SSF51197">
    <property type="entry name" value="Clavaminate synthase-like"/>
    <property type="match status" value="1"/>
</dbReference>
<dbReference type="PROSITE" id="PS51471">
    <property type="entry name" value="FE2OG_OXY"/>
    <property type="match status" value="1"/>
</dbReference>
<feature type="chain" id="PRO_0000408297" description="1-aminocyclopropane-1-carboxylate oxidase 1">
    <location>
        <begin position="1"/>
        <end position="310"/>
    </location>
</feature>
<feature type="domain" description="Fe2OG dioxygenase" evidence="2">
    <location>
        <begin position="158"/>
        <end position="259"/>
    </location>
</feature>
<feature type="coiled-coil region" evidence="1">
    <location>
        <begin position="113"/>
        <end position="133"/>
    </location>
</feature>
<feature type="binding site" evidence="2">
    <location>
        <position position="182"/>
    </location>
    <ligand>
        <name>Fe cation</name>
        <dbReference type="ChEBI" id="CHEBI:24875"/>
    </ligand>
</feature>
<feature type="binding site" evidence="2">
    <location>
        <position position="184"/>
    </location>
    <ligand>
        <name>Fe cation</name>
        <dbReference type="ChEBI" id="CHEBI:24875"/>
    </ligand>
</feature>
<feature type="binding site" evidence="2">
    <location>
        <position position="240"/>
    </location>
    <ligand>
        <name>Fe cation</name>
        <dbReference type="ChEBI" id="CHEBI:24875"/>
    </ligand>
</feature>
<feature type="binding site" evidence="2">
    <location>
        <position position="250"/>
    </location>
    <ligand>
        <name>2-oxoglutarate</name>
        <dbReference type="ChEBI" id="CHEBI:16810"/>
    </ligand>
</feature>
<reference key="1">
    <citation type="journal article" date="1999" name="Nature">
        <title>Sequence and analysis of chromosome 2 of the plant Arabidopsis thaliana.</title>
        <authorList>
            <person name="Lin X."/>
            <person name="Kaul S."/>
            <person name="Rounsley S.D."/>
            <person name="Shea T.P."/>
            <person name="Benito M.-I."/>
            <person name="Town C.D."/>
            <person name="Fujii C.Y."/>
            <person name="Mason T.M."/>
            <person name="Bowman C.L."/>
            <person name="Barnstead M.E."/>
            <person name="Feldblyum T.V."/>
            <person name="Buell C.R."/>
            <person name="Ketchum K.A."/>
            <person name="Lee J.J."/>
            <person name="Ronning C.M."/>
            <person name="Koo H.L."/>
            <person name="Moffat K.S."/>
            <person name="Cronin L.A."/>
            <person name="Shen M."/>
            <person name="Pai G."/>
            <person name="Van Aken S."/>
            <person name="Umayam L."/>
            <person name="Tallon L.J."/>
            <person name="Gill J.E."/>
            <person name="Adams M.D."/>
            <person name="Carrera A.J."/>
            <person name="Creasy T.H."/>
            <person name="Goodman H.M."/>
            <person name="Somerville C.R."/>
            <person name="Copenhaver G.P."/>
            <person name="Preuss D."/>
            <person name="Nierman W.C."/>
            <person name="White O."/>
            <person name="Eisen J.A."/>
            <person name="Salzberg S.L."/>
            <person name="Fraser C.M."/>
            <person name="Venter J.C."/>
        </authorList>
    </citation>
    <scope>NUCLEOTIDE SEQUENCE [LARGE SCALE GENOMIC DNA]</scope>
    <source>
        <strain>cv. Columbia</strain>
    </source>
</reference>
<reference key="2">
    <citation type="journal article" date="2017" name="Plant J.">
        <title>Araport11: a complete reannotation of the Arabidopsis thaliana reference genome.</title>
        <authorList>
            <person name="Cheng C.Y."/>
            <person name="Krishnakumar V."/>
            <person name="Chan A.P."/>
            <person name="Thibaud-Nissen F."/>
            <person name="Schobel S."/>
            <person name="Town C.D."/>
        </authorList>
    </citation>
    <scope>GENOME REANNOTATION</scope>
    <source>
        <strain>cv. Columbia</strain>
    </source>
</reference>
<reference key="3">
    <citation type="journal article" date="2003" name="Science">
        <title>Empirical analysis of transcriptional activity in the Arabidopsis genome.</title>
        <authorList>
            <person name="Yamada K."/>
            <person name="Lim J."/>
            <person name="Dale J.M."/>
            <person name="Chen H."/>
            <person name="Shinn P."/>
            <person name="Palm C.J."/>
            <person name="Southwick A.M."/>
            <person name="Wu H.C."/>
            <person name="Kim C.J."/>
            <person name="Nguyen M."/>
            <person name="Pham P.K."/>
            <person name="Cheuk R.F."/>
            <person name="Karlin-Newmann G."/>
            <person name="Liu S.X."/>
            <person name="Lam B."/>
            <person name="Sakano H."/>
            <person name="Wu T."/>
            <person name="Yu G."/>
            <person name="Miranda M."/>
            <person name="Quach H.L."/>
            <person name="Tripp M."/>
            <person name="Chang C.H."/>
            <person name="Lee J.M."/>
            <person name="Toriumi M.J."/>
            <person name="Chan M.M."/>
            <person name="Tang C.C."/>
            <person name="Onodera C.S."/>
            <person name="Deng J.M."/>
            <person name="Akiyama K."/>
            <person name="Ansari Y."/>
            <person name="Arakawa T."/>
            <person name="Banh J."/>
            <person name="Banno F."/>
            <person name="Bowser L."/>
            <person name="Brooks S.Y."/>
            <person name="Carninci P."/>
            <person name="Chao Q."/>
            <person name="Choy N."/>
            <person name="Enju A."/>
            <person name="Goldsmith A.D."/>
            <person name="Gurjal M."/>
            <person name="Hansen N.F."/>
            <person name="Hayashizaki Y."/>
            <person name="Johnson-Hopson C."/>
            <person name="Hsuan V.W."/>
            <person name="Iida K."/>
            <person name="Karnes M."/>
            <person name="Khan S."/>
            <person name="Koesema E."/>
            <person name="Ishida J."/>
            <person name="Jiang P.X."/>
            <person name="Jones T."/>
            <person name="Kawai J."/>
            <person name="Kamiya A."/>
            <person name="Meyers C."/>
            <person name="Nakajima M."/>
            <person name="Narusaka M."/>
            <person name="Seki M."/>
            <person name="Sakurai T."/>
            <person name="Satou M."/>
            <person name="Tamse R."/>
            <person name="Vaysberg M."/>
            <person name="Wallender E.K."/>
            <person name="Wong C."/>
            <person name="Yamamura Y."/>
            <person name="Yuan S."/>
            <person name="Shinozaki K."/>
            <person name="Davis R.W."/>
            <person name="Theologis A."/>
            <person name="Ecker J.R."/>
        </authorList>
    </citation>
    <scope>NUCLEOTIDE SEQUENCE [LARGE SCALE MRNA]</scope>
    <source>
        <strain>cv. Columbia</strain>
    </source>
</reference>
<reference key="4">
    <citation type="journal article" date="2003" name="Plant Physiol.">
        <title>Ethylene and auxin control the Arabidopsis response to decreased light intensity.</title>
        <authorList>
            <person name="Vandenbussche F."/>
            <person name="Vriezen W.H."/>
            <person name="Smalle J."/>
            <person name="Laarhoven L.J.J."/>
            <person name="Harren F.J.M."/>
            <person name="Van Der Straeten D."/>
        </authorList>
    </citation>
    <scope>INDUCTION BY LOW LIGHT</scope>
</reference>
<reference key="5">
    <citation type="journal article" date="2004" name="Plant J.">
        <title>Transcriptional profiling by cDNA-AFLP and microarray analysis reveals novel insights into the early response to ethylene in Arabidopsis.</title>
        <authorList>
            <person name="De Paepe A."/>
            <person name="Vuylsteke M."/>
            <person name="Van Hummelen P."/>
            <person name="Zabeau M."/>
            <person name="Van Der Straeten D."/>
        </authorList>
    </citation>
    <scope>INDUCTION BY ETHYLENE</scope>
    <source>
        <strain>cv. Columbia</strain>
    </source>
</reference>
<reference key="6">
    <citation type="journal article" date="2004" name="Proc. Natl. Acad. Sci. U.S.A.">
        <title>Hydrogen peroxide mediates plant root cell response to nutrient deprivation.</title>
        <authorList>
            <person name="Shin R."/>
            <person name="Schachtman D.P."/>
        </authorList>
    </citation>
    <scope>INDUCTION BY POTASSIUM DEPRIVATION</scope>
</reference>
<reference key="7">
    <citation type="journal article" date="2005" name="Plant Physiol.">
        <title>The potassium transporter AtHAK5 functions in K(+) deprivation-induced high-affinity K(+) uptake and AKT1 K(+) channel contribution to K(+) uptake kinetics in Arabidopsis roots.</title>
        <authorList>
            <person name="Gierth M."/>
            <person name="Maeser P."/>
            <person name="Schroeder J.I."/>
        </authorList>
    </citation>
    <scope>INDUCTION BY POTASSIUM DEPRIVATION</scope>
</reference>
<reference key="8">
    <citation type="journal article" date="2007" name="Plant Cell">
        <title>Saturated very-long-chain fatty acids promote cotton fiber and Arabidopsis cell elongation by activating ethylene biosynthesis.</title>
        <authorList>
            <person name="Qin Y.-M."/>
            <person name="Hu C.-Y."/>
            <person name="Pang Y."/>
            <person name="Kastaniotis A.J."/>
            <person name="Hiltunen J.K."/>
            <person name="Zhu Y.-X."/>
        </authorList>
    </citation>
    <scope>FUNCTION</scope>
    <scope>INDUCTION BY VERY-LONG-CHAIN FATTY ACIDS</scope>
    <source>
        <strain>cv. Columbia</strain>
    </source>
</reference>
<reference key="9">
    <citation type="journal article" date="2010" name="J. Exp. Bot.">
        <title>Ethylene and nitric oxide involvement in the up-regulation of key genes related to iron acquisition and homeostasis in Arabidopsis.</title>
        <authorList>
            <person name="Garcia M.J."/>
            <person name="Lucena C."/>
            <person name="Romera F.J."/>
            <person name="Alcantara E."/>
            <person name="Perez-Vicente R."/>
        </authorList>
    </citation>
    <scope>INDUCTION BY IRON DEFICIENCY</scope>
</reference>
<reference key="10">
    <citation type="journal article" date="2011" name="Plant Physiol. Biochem.">
        <title>A new model involving ethylene, nitric oxide and Fe to explain the regulation of Fe-acquisition genes in Strategy I plants.</title>
        <authorList>
            <person name="Garcia M.J."/>
            <person name="Suarez V."/>
            <person name="Romera F.J."/>
            <person name="Alcantara E."/>
            <person name="Perez-Vicente R."/>
        </authorList>
    </citation>
    <scope>INDUCTION BY NITRIC OXIDE</scope>
</reference>
<protein>
    <recommendedName>
        <fullName>1-aminocyclopropane-1-carboxylate oxidase 1</fullName>
        <shortName>ACC oxidase 1</shortName>
        <shortName>AtACO1</shortName>
        <ecNumber>1.14.17.4</ecNumber>
    </recommendedName>
</protein>
<comment type="function">
    <text evidence="7">Enzyme involved in the ethylene biosynthesis. May promote stem elongation by maximizing the extensibility cells, possibly by activating ethylene biosynthesis, in response to very-long-chain fatty acids (VLCFAs C20:0 to C30:0).</text>
</comment>
<comment type="catalytic activity">
    <reaction>
        <text>1-aminocyclopropane-1-carboxylate + L-ascorbate + O2 = ethene + L-dehydroascorbate + hydrogen cyanide + CO2 + 2 H2O</text>
        <dbReference type="Rhea" id="RHEA:23640"/>
        <dbReference type="ChEBI" id="CHEBI:15377"/>
        <dbReference type="ChEBI" id="CHEBI:15379"/>
        <dbReference type="ChEBI" id="CHEBI:16526"/>
        <dbReference type="ChEBI" id="CHEBI:18153"/>
        <dbReference type="ChEBI" id="CHEBI:18407"/>
        <dbReference type="ChEBI" id="CHEBI:38290"/>
        <dbReference type="ChEBI" id="CHEBI:58360"/>
        <dbReference type="ChEBI" id="CHEBI:58539"/>
        <dbReference type="EC" id="1.14.17.4"/>
    </reaction>
</comment>
<comment type="cofactor">
    <cofactor evidence="2">
        <name>Fe(2+)</name>
        <dbReference type="ChEBI" id="CHEBI:29033"/>
    </cofactor>
    <text evidence="2">Binds 1 Fe(2+) ion per subunit.</text>
</comment>
<comment type="pathway">
    <text>Alkene biosynthesis; ethylene biosynthesis via S-adenosyl-L-methionine; ethylene from S-adenosyl-L-methionine: step 2/2.</text>
</comment>
<comment type="induction">
    <text evidence="3 4 5 6 7 8 9">Upon potassium K(+) and iron deprivation. Induced in leaf blades in low light intensities. Seems repressed by ethylene. Accumulates in response to very-long-chain fatty acids (VLCFAs C20:0 to C30:0). Induced in roots by nitric oxide (NO).</text>
</comment>
<comment type="similarity">
    <text evidence="10">Belongs to the iron/ascorbate-dependent oxidoreductase family.</text>
</comment>
<proteinExistence type="evidence at transcript level"/>
<keyword id="KW-0175">Coiled coil</keyword>
<keyword id="KW-0266">Ethylene biosynthesis</keyword>
<keyword id="KW-0408">Iron</keyword>
<keyword id="KW-0479">Metal-binding</keyword>
<keyword id="KW-0560">Oxidoreductase</keyword>
<keyword id="KW-0611">Plant defense</keyword>
<keyword id="KW-1185">Reference proteome</keyword>
<keyword id="KW-0847">Vitamin C</keyword>